<name>OBG_EHRRG</name>
<dbReference type="EC" id="3.6.5.-" evidence="1"/>
<dbReference type="EMBL" id="CR925677">
    <property type="protein sequence ID" value="CAI27949.1"/>
    <property type="molecule type" value="Genomic_DNA"/>
</dbReference>
<dbReference type="RefSeq" id="WP_011255616.1">
    <property type="nucleotide sequence ID" value="NC_006831.1"/>
</dbReference>
<dbReference type="SMR" id="Q5FH94"/>
<dbReference type="KEGG" id="erg:ERGA_CDS_04970"/>
<dbReference type="HOGENOM" id="CLU_011747_2_0_5"/>
<dbReference type="OrthoDB" id="9807318at2"/>
<dbReference type="Proteomes" id="UP000000533">
    <property type="component" value="Chromosome"/>
</dbReference>
<dbReference type="GO" id="GO:0005737">
    <property type="term" value="C:cytoplasm"/>
    <property type="evidence" value="ECO:0007669"/>
    <property type="project" value="UniProtKB-SubCell"/>
</dbReference>
<dbReference type="GO" id="GO:0005525">
    <property type="term" value="F:GTP binding"/>
    <property type="evidence" value="ECO:0007669"/>
    <property type="project" value="UniProtKB-UniRule"/>
</dbReference>
<dbReference type="GO" id="GO:0003924">
    <property type="term" value="F:GTPase activity"/>
    <property type="evidence" value="ECO:0007669"/>
    <property type="project" value="UniProtKB-UniRule"/>
</dbReference>
<dbReference type="GO" id="GO:0000287">
    <property type="term" value="F:magnesium ion binding"/>
    <property type="evidence" value="ECO:0007669"/>
    <property type="project" value="InterPro"/>
</dbReference>
<dbReference type="GO" id="GO:0042254">
    <property type="term" value="P:ribosome biogenesis"/>
    <property type="evidence" value="ECO:0007669"/>
    <property type="project" value="UniProtKB-UniRule"/>
</dbReference>
<dbReference type="CDD" id="cd01898">
    <property type="entry name" value="Obg"/>
    <property type="match status" value="1"/>
</dbReference>
<dbReference type="FunFam" id="2.70.210.12:FF:000001">
    <property type="entry name" value="GTPase Obg"/>
    <property type="match status" value="1"/>
</dbReference>
<dbReference type="Gene3D" id="2.70.210.12">
    <property type="entry name" value="GTP1/OBG domain"/>
    <property type="match status" value="1"/>
</dbReference>
<dbReference type="Gene3D" id="3.40.50.300">
    <property type="entry name" value="P-loop containing nucleotide triphosphate hydrolases"/>
    <property type="match status" value="1"/>
</dbReference>
<dbReference type="HAMAP" id="MF_01454">
    <property type="entry name" value="GTPase_Obg"/>
    <property type="match status" value="1"/>
</dbReference>
<dbReference type="InterPro" id="IPR031167">
    <property type="entry name" value="G_OBG"/>
</dbReference>
<dbReference type="InterPro" id="IPR006073">
    <property type="entry name" value="GTP-bd"/>
</dbReference>
<dbReference type="InterPro" id="IPR014100">
    <property type="entry name" value="GTP-bd_Obg/CgtA"/>
</dbReference>
<dbReference type="InterPro" id="IPR006169">
    <property type="entry name" value="GTP1_OBG_dom"/>
</dbReference>
<dbReference type="InterPro" id="IPR036726">
    <property type="entry name" value="GTP1_OBG_dom_sf"/>
</dbReference>
<dbReference type="InterPro" id="IPR045086">
    <property type="entry name" value="OBG_GTPase"/>
</dbReference>
<dbReference type="InterPro" id="IPR027417">
    <property type="entry name" value="P-loop_NTPase"/>
</dbReference>
<dbReference type="NCBIfam" id="TIGR02729">
    <property type="entry name" value="Obg_CgtA"/>
    <property type="match status" value="1"/>
</dbReference>
<dbReference type="NCBIfam" id="NF008955">
    <property type="entry name" value="PRK12297.1"/>
    <property type="match status" value="1"/>
</dbReference>
<dbReference type="NCBIfam" id="NF008956">
    <property type="entry name" value="PRK12299.1"/>
    <property type="match status" value="1"/>
</dbReference>
<dbReference type="PANTHER" id="PTHR11702">
    <property type="entry name" value="DEVELOPMENTALLY REGULATED GTP-BINDING PROTEIN-RELATED"/>
    <property type="match status" value="1"/>
</dbReference>
<dbReference type="PANTHER" id="PTHR11702:SF31">
    <property type="entry name" value="MITOCHONDRIAL RIBOSOME-ASSOCIATED GTPASE 2"/>
    <property type="match status" value="1"/>
</dbReference>
<dbReference type="Pfam" id="PF01018">
    <property type="entry name" value="GTP1_OBG"/>
    <property type="match status" value="1"/>
</dbReference>
<dbReference type="Pfam" id="PF01926">
    <property type="entry name" value="MMR_HSR1"/>
    <property type="match status" value="1"/>
</dbReference>
<dbReference type="PIRSF" id="PIRSF002401">
    <property type="entry name" value="GTP_bd_Obg/CgtA"/>
    <property type="match status" value="1"/>
</dbReference>
<dbReference type="PRINTS" id="PR00326">
    <property type="entry name" value="GTP1OBG"/>
</dbReference>
<dbReference type="SUPFAM" id="SSF82051">
    <property type="entry name" value="Obg GTP-binding protein N-terminal domain"/>
    <property type="match status" value="1"/>
</dbReference>
<dbReference type="SUPFAM" id="SSF52540">
    <property type="entry name" value="P-loop containing nucleoside triphosphate hydrolases"/>
    <property type="match status" value="1"/>
</dbReference>
<dbReference type="PROSITE" id="PS51710">
    <property type="entry name" value="G_OBG"/>
    <property type="match status" value="1"/>
</dbReference>
<dbReference type="PROSITE" id="PS51883">
    <property type="entry name" value="OBG"/>
    <property type="match status" value="1"/>
</dbReference>
<comment type="function">
    <text evidence="1">An essential GTPase which binds GTP, GDP and possibly (p)ppGpp with moderate affinity, with high nucleotide exchange rates and a fairly low GTP hydrolysis rate. Plays a role in control of the cell cycle, stress response, ribosome biogenesis and in those bacteria that undergo differentiation, in morphogenesis control.</text>
</comment>
<comment type="cofactor">
    <cofactor evidence="1">
        <name>Mg(2+)</name>
        <dbReference type="ChEBI" id="CHEBI:18420"/>
    </cofactor>
</comment>
<comment type="subunit">
    <text evidence="1">Monomer.</text>
</comment>
<comment type="subcellular location">
    <subcellularLocation>
        <location evidence="1">Cytoplasm</location>
    </subcellularLocation>
</comment>
<comment type="similarity">
    <text evidence="1">Belongs to the TRAFAC class OBG-HflX-like GTPase superfamily. OBG GTPase family.</text>
</comment>
<protein>
    <recommendedName>
        <fullName evidence="1">GTPase Obg</fullName>
        <ecNumber evidence="1">3.6.5.-</ecNumber>
    </recommendedName>
    <alternativeName>
        <fullName evidence="1">GTP-binding protein Obg</fullName>
    </alternativeName>
</protein>
<sequence>MSFIDEAKVYLKAGKGGDGCSSFRREKFIEFGGPDGGNGGNGGSIIFIASHHVNTLIYFKYKQHIKAENGHPGLSKNKFGLSGRDITIEVPIGTQIYDEEGTLITDLNSENQKFIVAQGGKGGIGNSRYKTSTNRAPRYFTLGEQGEEKWIILKLKIISDVGIIGLPNAGKSSFLASCTNSKTKIANYPFTTLEPELGVAFINNTELVLADIPGLISGAHLGYGIGDKFLKHIERCSILLHIIDCTLEDIIDSYKCIRKELSLYSKALTEKTEFILLNKCDLLDKEEISIKKRLLAEHTKKEIFTSSIKKSKQHILSILIKHINKDCSINKPFIYDPFNT</sequence>
<accession>Q5FH94</accession>
<organism>
    <name type="scientific">Ehrlichia ruminantium (strain Gardel)</name>
    <dbReference type="NCBI Taxonomy" id="302409"/>
    <lineage>
        <taxon>Bacteria</taxon>
        <taxon>Pseudomonadati</taxon>
        <taxon>Pseudomonadota</taxon>
        <taxon>Alphaproteobacteria</taxon>
        <taxon>Rickettsiales</taxon>
        <taxon>Anaplasmataceae</taxon>
        <taxon>Ehrlichia</taxon>
    </lineage>
</organism>
<reference key="1">
    <citation type="journal article" date="2006" name="J. Bacteriol.">
        <title>Comparative genomic analysis of three strains of Ehrlichia ruminantium reveals an active process of genome size plasticity.</title>
        <authorList>
            <person name="Frutos R."/>
            <person name="Viari A."/>
            <person name="Ferraz C."/>
            <person name="Morgat A."/>
            <person name="Eychenie S."/>
            <person name="Kandassamy Y."/>
            <person name="Chantal I."/>
            <person name="Bensaid A."/>
            <person name="Coissac E."/>
            <person name="Vachiery N."/>
            <person name="Demaille J."/>
            <person name="Martinez D."/>
        </authorList>
    </citation>
    <scope>NUCLEOTIDE SEQUENCE [LARGE SCALE GENOMIC DNA]</scope>
    <source>
        <strain>Gardel</strain>
    </source>
</reference>
<proteinExistence type="inferred from homology"/>
<feature type="chain" id="PRO_0000385901" description="GTPase Obg">
    <location>
        <begin position="1"/>
        <end position="340"/>
    </location>
</feature>
<feature type="domain" description="Obg" evidence="2">
    <location>
        <begin position="1"/>
        <end position="158"/>
    </location>
</feature>
<feature type="domain" description="OBG-type G" evidence="1">
    <location>
        <begin position="159"/>
        <end position="325"/>
    </location>
</feature>
<feature type="binding site" evidence="1">
    <location>
        <begin position="165"/>
        <end position="172"/>
    </location>
    <ligand>
        <name>GTP</name>
        <dbReference type="ChEBI" id="CHEBI:37565"/>
    </ligand>
</feature>
<feature type="binding site" evidence="1">
    <location>
        <position position="172"/>
    </location>
    <ligand>
        <name>Mg(2+)</name>
        <dbReference type="ChEBI" id="CHEBI:18420"/>
    </ligand>
</feature>
<feature type="binding site" evidence="1">
    <location>
        <begin position="190"/>
        <end position="194"/>
    </location>
    <ligand>
        <name>GTP</name>
        <dbReference type="ChEBI" id="CHEBI:37565"/>
    </ligand>
</feature>
<feature type="binding site" evidence="1">
    <location>
        <position position="192"/>
    </location>
    <ligand>
        <name>Mg(2+)</name>
        <dbReference type="ChEBI" id="CHEBI:18420"/>
    </ligand>
</feature>
<feature type="binding site" evidence="1">
    <location>
        <begin position="211"/>
        <end position="214"/>
    </location>
    <ligand>
        <name>GTP</name>
        <dbReference type="ChEBI" id="CHEBI:37565"/>
    </ligand>
</feature>
<feature type="binding site" evidence="1">
    <location>
        <begin position="278"/>
        <end position="281"/>
    </location>
    <ligand>
        <name>GTP</name>
        <dbReference type="ChEBI" id="CHEBI:37565"/>
    </ligand>
</feature>
<feature type="binding site" evidence="1">
    <location>
        <begin position="306"/>
        <end position="308"/>
    </location>
    <ligand>
        <name>GTP</name>
        <dbReference type="ChEBI" id="CHEBI:37565"/>
    </ligand>
</feature>
<evidence type="ECO:0000255" key="1">
    <source>
        <dbReference type="HAMAP-Rule" id="MF_01454"/>
    </source>
</evidence>
<evidence type="ECO:0000255" key="2">
    <source>
        <dbReference type="PROSITE-ProRule" id="PRU01231"/>
    </source>
</evidence>
<gene>
    <name evidence="1" type="primary">obg</name>
    <name type="ordered locus">ERGA_CDS_04970</name>
</gene>
<keyword id="KW-0963">Cytoplasm</keyword>
<keyword id="KW-0342">GTP-binding</keyword>
<keyword id="KW-0378">Hydrolase</keyword>
<keyword id="KW-0460">Magnesium</keyword>
<keyword id="KW-0479">Metal-binding</keyword>
<keyword id="KW-0547">Nucleotide-binding</keyword>